<comment type="function">
    <text evidence="3 5">Required for efficient mating. Involved in the production of alpha-factor, the KAR9 and TUB1 location to the shmoo tip and nuclear migration into pheromone-induced shmoos.</text>
</comment>
<comment type="subunit">
    <text evidence="6">Interacts with GET4.</text>
</comment>
<comment type="interaction">
    <interactant intactId="EBI-34904">
        <id>Q12285</id>
    </interactant>
    <interactant intactId="EBI-2989">
        <id>Q12154</id>
        <label>GET3</label>
    </interactant>
    <organismsDiffer>false</organismsDiffer>
    <experiments>10</experiments>
</comment>
<comment type="interaction">
    <interactant intactId="EBI-34904">
        <id>Q12285</id>
    </interactant>
    <interactant intactId="EBI-36940">
        <id>Q12125</id>
        <label>GET4</label>
    </interactant>
    <organismsDiffer>false</organismsDiffer>
    <experiments>18</experiments>
</comment>
<comment type="interaction">
    <interactant intactId="EBI-34904">
        <id>Q12285</id>
    </interactant>
    <interactant intactId="EBI-8050">
        <id>P31539</id>
        <label>HSP104</label>
    </interactant>
    <organismsDiffer>false</organismsDiffer>
    <experiments>2</experiments>
</comment>
<comment type="interaction">
    <interactant intactId="EBI-34904">
        <id>Q12285</id>
    </interactant>
    <interactant intactId="EBI-16577">
        <id>P22214</id>
        <label>SEC22</label>
    </interactant>
    <organismsDiffer>false</organismsDiffer>
    <experiments>3</experiments>
</comment>
<comment type="interaction">
    <interactant intactId="EBI-34904">
        <id>Q12285</id>
    </interactant>
    <interactant intactId="EBI-31784">
        <id>Q12118</id>
        <label>SGT2</label>
    </interactant>
    <organismsDiffer>false</organismsDiffer>
    <experiments>16</experiments>
</comment>
<comment type="interaction">
    <interactant intactId="EBI-34904">
        <id>Q12285</id>
    </interactant>
    <interactant intactId="EBI-10420">
        <id>P25491</id>
        <label>YDJ1</label>
    </interactant>
    <organismsDiffer>false</organismsDiffer>
    <experiments>2</experiments>
</comment>
<comment type="subcellular location">
    <subcellularLocation>
        <location>Cytoplasm</location>
        <location>Cytosol</location>
    </subcellularLocation>
    <subcellularLocation>
        <location>Nucleus</location>
    </subcellularLocation>
    <text>Detected in both cytosol and nucleus but is predominantly cytosolic.</text>
</comment>
<comment type="miscellaneous">
    <text evidence="4">Present with 6510 molecules/cell in log phase SD medium.</text>
</comment>
<accession>Q12285</accession>
<accession>D6W1V6</accession>
<feature type="chain" id="PRO_0000235917" description="Ubiquitin-like protein MDY2">
    <location>
        <begin position="1"/>
        <end position="212"/>
    </location>
</feature>
<feature type="domain" description="Ubiquitin-like" evidence="1">
    <location>
        <begin position="74"/>
        <end position="152"/>
    </location>
</feature>
<feature type="region of interest" description="Disordered" evidence="2">
    <location>
        <begin position="150"/>
        <end position="177"/>
    </location>
</feature>
<feature type="helix" evidence="8">
    <location>
        <begin position="4"/>
        <end position="6"/>
    </location>
</feature>
<feature type="helix" evidence="7">
    <location>
        <begin position="8"/>
        <end position="20"/>
    </location>
</feature>
<feature type="helix" evidence="7">
    <location>
        <begin position="35"/>
        <end position="37"/>
    </location>
</feature>
<feature type="strand" evidence="11">
    <location>
        <begin position="74"/>
        <end position="80"/>
    </location>
</feature>
<feature type="strand" evidence="11">
    <location>
        <begin position="82"/>
        <end position="84"/>
    </location>
</feature>
<feature type="strand" evidence="11">
    <location>
        <begin position="86"/>
        <end position="92"/>
    </location>
</feature>
<feature type="helix" evidence="11">
    <location>
        <begin position="98"/>
        <end position="107"/>
    </location>
</feature>
<feature type="helix" evidence="11">
    <location>
        <begin position="114"/>
        <end position="116"/>
    </location>
</feature>
<feature type="strand" evidence="11">
    <location>
        <begin position="117"/>
        <end position="121"/>
    </location>
</feature>
<feature type="strand" evidence="11">
    <location>
        <begin position="124"/>
        <end position="126"/>
    </location>
</feature>
<feature type="helix" evidence="11">
    <location>
        <begin position="132"/>
        <end position="134"/>
    </location>
</feature>
<feature type="strand" evidence="10">
    <location>
        <begin position="139"/>
        <end position="141"/>
    </location>
</feature>
<feature type="strand" evidence="11">
    <location>
        <begin position="143"/>
        <end position="148"/>
    </location>
</feature>
<feature type="helix" evidence="9">
    <location>
        <begin position="179"/>
        <end position="189"/>
    </location>
</feature>
<feature type="turn" evidence="9">
    <location>
        <begin position="190"/>
        <end position="192"/>
    </location>
</feature>
<feature type="helix" evidence="9">
    <location>
        <begin position="194"/>
        <end position="210"/>
    </location>
</feature>
<dbReference type="EMBL" id="Z48149">
    <property type="protein sequence ID" value="CAA88151.1"/>
    <property type="molecule type" value="Genomic_DNA"/>
</dbReference>
<dbReference type="EMBL" id="Z74853">
    <property type="protein sequence ID" value="CAA99130.1"/>
    <property type="molecule type" value="Genomic_DNA"/>
</dbReference>
<dbReference type="EMBL" id="BK006948">
    <property type="protein sequence ID" value="DAA10672.1"/>
    <property type="molecule type" value="Genomic_DNA"/>
</dbReference>
<dbReference type="PIR" id="S51888">
    <property type="entry name" value="S51888"/>
</dbReference>
<dbReference type="RefSeq" id="NP_014530.1">
    <property type="nucleotide sequence ID" value="NM_001183365.1"/>
</dbReference>
<dbReference type="PDB" id="2LNZ">
    <property type="method" value="NMR"/>
    <property type="chains" value="A/B=152-212"/>
</dbReference>
<dbReference type="PDB" id="2LXA">
    <property type="method" value="NMR"/>
    <property type="chains" value="A=74-151"/>
</dbReference>
<dbReference type="PDB" id="2LXC">
    <property type="method" value="NMR"/>
    <property type="chains" value="A=74-151"/>
</dbReference>
<dbReference type="PDB" id="2WPV">
    <property type="method" value="X-ray"/>
    <property type="resolution" value="1.99 A"/>
    <property type="chains" value="B/D/F/H=1-59"/>
</dbReference>
<dbReference type="PDB" id="3LKU">
    <property type="method" value="X-ray"/>
    <property type="resolution" value="2.80 A"/>
    <property type="chains" value="B/D/F=3-56"/>
</dbReference>
<dbReference type="PDB" id="3VEJ">
    <property type="method" value="X-ray"/>
    <property type="resolution" value="1.23 A"/>
    <property type="chains" value="A/B=175-212"/>
</dbReference>
<dbReference type="PDB" id="3ZDM">
    <property type="method" value="X-ray"/>
    <property type="resolution" value="1.80 A"/>
    <property type="chains" value="C/F=71-151"/>
</dbReference>
<dbReference type="PDB" id="4A20">
    <property type="method" value="X-ray"/>
    <property type="resolution" value="1.78 A"/>
    <property type="chains" value="A=70-152"/>
</dbReference>
<dbReference type="PDB" id="4ASW">
    <property type="method" value="NMR"/>
    <property type="chains" value="C=70-152"/>
</dbReference>
<dbReference type="PDB" id="4GOC">
    <property type="method" value="X-ray"/>
    <property type="resolution" value="2.40 A"/>
    <property type="chains" value="A/B/C=74-148"/>
</dbReference>
<dbReference type="PDB" id="4PWX">
    <property type="method" value="X-ray"/>
    <property type="resolution" value="5.40 A"/>
    <property type="chains" value="D/F=1-54"/>
</dbReference>
<dbReference type="PDB" id="5BW8">
    <property type="method" value="X-ray"/>
    <property type="resolution" value="2.80 A"/>
    <property type="chains" value="D=1-54"/>
</dbReference>
<dbReference type="PDB" id="5BWK">
    <property type="method" value="X-ray"/>
    <property type="resolution" value="6.00 A"/>
    <property type="chains" value="F/H/J/L/R/T/V/X=1-56"/>
</dbReference>
<dbReference type="PDBsum" id="2LNZ"/>
<dbReference type="PDBsum" id="2LXA"/>
<dbReference type="PDBsum" id="2LXC"/>
<dbReference type="PDBsum" id="2WPV"/>
<dbReference type="PDBsum" id="3LKU"/>
<dbReference type="PDBsum" id="3VEJ"/>
<dbReference type="PDBsum" id="3ZDM"/>
<dbReference type="PDBsum" id="4A20"/>
<dbReference type="PDBsum" id="4ASW"/>
<dbReference type="PDBsum" id="4GOC"/>
<dbReference type="PDBsum" id="4PWX"/>
<dbReference type="PDBsum" id="5BW8"/>
<dbReference type="PDBsum" id="5BWK"/>
<dbReference type="BMRB" id="Q12285"/>
<dbReference type="SMR" id="Q12285"/>
<dbReference type="BioGRID" id="34289">
    <property type="interactions" value="352"/>
</dbReference>
<dbReference type="ComplexPortal" id="CPX-1861">
    <property type="entry name" value="GET4-GET5 transmembrane domain recognition complex"/>
</dbReference>
<dbReference type="DIP" id="DIP-1982N"/>
<dbReference type="FunCoup" id="Q12285">
    <property type="interactions" value="113"/>
</dbReference>
<dbReference type="IntAct" id="Q12285">
    <property type="interactions" value="19"/>
</dbReference>
<dbReference type="MINT" id="Q12285"/>
<dbReference type="STRING" id="4932.YOL111C"/>
<dbReference type="TCDB" id="3.A.21.1.1">
    <property type="family name" value="the c-terminal tail-anchored membrane protein biogenesis/ insertion complex (tamp-b) family"/>
</dbReference>
<dbReference type="iPTMnet" id="Q12285"/>
<dbReference type="PaxDb" id="4932-YOL111C"/>
<dbReference type="PeptideAtlas" id="Q12285"/>
<dbReference type="EnsemblFungi" id="YOL111C_mRNA">
    <property type="protein sequence ID" value="YOL111C"/>
    <property type="gene ID" value="YOL111C"/>
</dbReference>
<dbReference type="GeneID" id="854038"/>
<dbReference type="KEGG" id="sce:YOL111C"/>
<dbReference type="AGR" id="SGD:S000005471"/>
<dbReference type="SGD" id="S000005471">
    <property type="gene designation" value="MDY2"/>
</dbReference>
<dbReference type="VEuPathDB" id="FungiDB:YOL111C"/>
<dbReference type="eggNOG" id="KOG0011">
    <property type="taxonomic scope" value="Eukaryota"/>
</dbReference>
<dbReference type="HOGENOM" id="CLU_1294717_0_0_1"/>
<dbReference type="InParanoid" id="Q12285"/>
<dbReference type="OMA" id="NCMVSAP"/>
<dbReference type="OrthoDB" id="4067208at2759"/>
<dbReference type="BioCyc" id="YEAST:G3O-33508-MONOMER"/>
<dbReference type="BioGRID-ORCS" id="854038">
    <property type="hits" value="0 hits in 10 CRISPR screens"/>
</dbReference>
<dbReference type="CD-CODE" id="E03F929F">
    <property type="entry name" value="Stress granule"/>
</dbReference>
<dbReference type="ChiTaRS" id="MDY2">
    <property type="organism name" value="yeast"/>
</dbReference>
<dbReference type="EvolutionaryTrace" id="Q12285"/>
<dbReference type="PRO" id="PR:Q12285"/>
<dbReference type="Proteomes" id="UP000002311">
    <property type="component" value="Chromosome XV"/>
</dbReference>
<dbReference type="RNAct" id="Q12285">
    <property type="molecule type" value="protein"/>
</dbReference>
<dbReference type="GO" id="GO:0005737">
    <property type="term" value="C:cytoplasm"/>
    <property type="evidence" value="ECO:0007005"/>
    <property type="project" value="SGD"/>
</dbReference>
<dbReference type="GO" id="GO:0010494">
    <property type="term" value="C:cytoplasmic stress granule"/>
    <property type="evidence" value="ECO:0000314"/>
    <property type="project" value="SGD"/>
</dbReference>
<dbReference type="GO" id="GO:0005829">
    <property type="term" value="C:cytosol"/>
    <property type="evidence" value="ECO:0000304"/>
    <property type="project" value="Reactome"/>
</dbReference>
<dbReference type="GO" id="GO:0005634">
    <property type="term" value="C:nucleus"/>
    <property type="evidence" value="ECO:0000314"/>
    <property type="project" value="SGD"/>
</dbReference>
<dbReference type="GO" id="GO:0072380">
    <property type="term" value="C:TRC complex"/>
    <property type="evidence" value="ECO:0000314"/>
    <property type="project" value="SGD"/>
</dbReference>
<dbReference type="GO" id="GO:0030674">
    <property type="term" value="F:protein-macromolecule adaptor activity"/>
    <property type="evidence" value="ECO:0000314"/>
    <property type="project" value="SGD"/>
</dbReference>
<dbReference type="GO" id="GO:0000753">
    <property type="term" value="P:cell morphogenesis involved in conjugation with cellular fusion"/>
    <property type="evidence" value="ECO:0000315"/>
    <property type="project" value="SGD"/>
</dbReference>
<dbReference type="GO" id="GO:0006620">
    <property type="term" value="P:post-translational protein targeting to endoplasmic reticulum membrane"/>
    <property type="evidence" value="ECO:0000314"/>
    <property type="project" value="SGD"/>
</dbReference>
<dbReference type="GO" id="GO:0045048">
    <property type="term" value="P:protein insertion into ER membrane"/>
    <property type="evidence" value="ECO:0007003"/>
    <property type="project" value="SGD"/>
</dbReference>
<dbReference type="CDD" id="cd01805">
    <property type="entry name" value="Ubl_Rad23"/>
    <property type="match status" value="1"/>
</dbReference>
<dbReference type="Gene3D" id="1.10.286.70">
    <property type="entry name" value="Get5 dimerization domain"/>
    <property type="match status" value="1"/>
</dbReference>
<dbReference type="Gene3D" id="3.10.20.90">
    <property type="entry name" value="Phosphatidylinositol 3-kinase Catalytic Subunit, Chain A, domain 1"/>
    <property type="match status" value="1"/>
</dbReference>
<dbReference type="Gene3D" id="1.20.5.510">
    <property type="entry name" value="Single helix bin"/>
    <property type="match status" value="1"/>
</dbReference>
<dbReference type="InterPro" id="IPR040474">
    <property type="entry name" value="MDY2_C"/>
</dbReference>
<dbReference type="InterPro" id="IPR031765">
    <property type="entry name" value="Mdy2_get4-bd"/>
</dbReference>
<dbReference type="InterPro" id="IPR000626">
    <property type="entry name" value="Ubiquitin-like_dom"/>
</dbReference>
<dbReference type="InterPro" id="IPR029071">
    <property type="entry name" value="Ubiquitin-like_domsf"/>
</dbReference>
<dbReference type="InterPro" id="IPR047154">
    <property type="entry name" value="UBL4A-like"/>
</dbReference>
<dbReference type="PANTHER" id="PTHR46555">
    <property type="entry name" value="UBIQUITIN-LIKE PROTEIN 4A"/>
    <property type="match status" value="1"/>
</dbReference>
<dbReference type="PANTHER" id="PTHR46555:SF1">
    <property type="entry name" value="UBIQUITIN-LIKE PROTEIN 4A"/>
    <property type="match status" value="1"/>
</dbReference>
<dbReference type="Pfam" id="PF16843">
    <property type="entry name" value="Get5_bdg"/>
    <property type="match status" value="1"/>
</dbReference>
<dbReference type="Pfam" id="PF18514">
    <property type="entry name" value="MDY2_C"/>
    <property type="match status" value="1"/>
</dbReference>
<dbReference type="Pfam" id="PF00240">
    <property type="entry name" value="ubiquitin"/>
    <property type="match status" value="1"/>
</dbReference>
<dbReference type="SMART" id="SM00213">
    <property type="entry name" value="UBQ"/>
    <property type="match status" value="1"/>
</dbReference>
<dbReference type="SUPFAM" id="SSF54236">
    <property type="entry name" value="Ubiquitin-like"/>
    <property type="match status" value="1"/>
</dbReference>
<dbReference type="PROSITE" id="PS50053">
    <property type="entry name" value="UBIQUITIN_2"/>
    <property type="match status" value="1"/>
</dbReference>
<protein>
    <recommendedName>
        <fullName>Ubiquitin-like protein MDY2</fullName>
    </recommendedName>
    <alternativeName>
        <fullName>Golgi to ER traffic protein 5</fullName>
    </alternativeName>
    <alternativeName>
        <fullName>Mating-deficient protein 2</fullName>
    </alternativeName>
    <alternativeName>
        <fullName>Translation machinery-associated protein 24</fullName>
    </alternativeName>
</protein>
<organism>
    <name type="scientific">Saccharomyces cerevisiae (strain ATCC 204508 / S288c)</name>
    <name type="common">Baker's yeast</name>
    <dbReference type="NCBI Taxonomy" id="559292"/>
    <lineage>
        <taxon>Eukaryota</taxon>
        <taxon>Fungi</taxon>
        <taxon>Dikarya</taxon>
        <taxon>Ascomycota</taxon>
        <taxon>Saccharomycotina</taxon>
        <taxon>Saccharomycetes</taxon>
        <taxon>Saccharomycetales</taxon>
        <taxon>Saccharomycetaceae</taxon>
        <taxon>Saccharomyces</taxon>
    </lineage>
</organism>
<evidence type="ECO:0000255" key="1">
    <source>
        <dbReference type="PROSITE-ProRule" id="PRU00214"/>
    </source>
</evidence>
<evidence type="ECO:0000256" key="2">
    <source>
        <dbReference type="SAM" id="MobiDB-lite"/>
    </source>
</evidence>
<evidence type="ECO:0000269" key="3">
    <source>
    </source>
</evidence>
<evidence type="ECO:0000269" key="4">
    <source>
    </source>
</evidence>
<evidence type="ECO:0000269" key="5">
    <source>
    </source>
</evidence>
<evidence type="ECO:0000269" key="6">
    <source>
    </source>
</evidence>
<evidence type="ECO:0007829" key="7">
    <source>
        <dbReference type="PDB" id="2WPV"/>
    </source>
</evidence>
<evidence type="ECO:0007829" key="8">
    <source>
        <dbReference type="PDB" id="3LKU"/>
    </source>
</evidence>
<evidence type="ECO:0007829" key="9">
    <source>
        <dbReference type="PDB" id="3VEJ"/>
    </source>
</evidence>
<evidence type="ECO:0007829" key="10">
    <source>
        <dbReference type="PDB" id="3ZDM"/>
    </source>
</evidence>
<evidence type="ECO:0007829" key="11">
    <source>
        <dbReference type="PDB" id="4A20"/>
    </source>
</evidence>
<sequence>MSTSASGPEHEFVSKFLTLATLTEPKLPKSYTKPLKDVTNLGVPLPTLKYKYKQNRAKKLKLHQDQQGQDNAAVHLTLKKIQAPKFSIEHDFSPSDTILQIKQHLISEEKASHISEIKLLLKGKVLHDNLFLSDLKVTPANSTITVMIKPNPTISKEPEAEKSTNSPAPAPPQELTVPWDDIEALLKNNFENDQAAVRQVMERLQKGWSLAK</sequence>
<name>MDY2_YEAST</name>
<gene>
    <name type="primary">MDY2</name>
    <name type="synonym">GET5</name>
    <name type="synonym">TMA24</name>
    <name type="ordered locus">YOL111C</name>
</gene>
<keyword id="KW-0002">3D-structure</keyword>
<keyword id="KW-0963">Cytoplasm</keyword>
<keyword id="KW-0539">Nucleus</keyword>
<keyword id="KW-1185">Reference proteome</keyword>
<reference key="1">
    <citation type="journal article" date="1995" name="Yeast">
        <title>Sequence analysis of a 44 kb DNA fragment of yeast chromosome XV including the Ty1-H3 retrotransposon, the suf1(+) frameshift suppressor gene for tRNA-Gly, the yeast transfer RNA-Thr-1a and a delta element.</title>
        <authorList>
            <person name="Vandenbol M."/>
            <person name="Durand P."/>
            <person name="Portetelle D."/>
            <person name="Hilger F."/>
        </authorList>
    </citation>
    <scope>NUCLEOTIDE SEQUENCE [GENOMIC DNA]</scope>
    <source>
        <strain>ATCC 96604 / S288c / FY1679</strain>
    </source>
</reference>
<reference key="2">
    <citation type="journal article" date="1997" name="Nature">
        <title>The nucleotide sequence of Saccharomyces cerevisiae chromosome XV.</title>
        <authorList>
            <person name="Dujon B."/>
            <person name="Albermann K."/>
            <person name="Aldea M."/>
            <person name="Alexandraki D."/>
            <person name="Ansorge W."/>
            <person name="Arino J."/>
            <person name="Benes V."/>
            <person name="Bohn C."/>
            <person name="Bolotin-Fukuhara M."/>
            <person name="Bordonne R."/>
            <person name="Boyer J."/>
            <person name="Camasses A."/>
            <person name="Casamayor A."/>
            <person name="Casas C."/>
            <person name="Cheret G."/>
            <person name="Cziepluch C."/>
            <person name="Daignan-Fornier B."/>
            <person name="Dang V.-D."/>
            <person name="de Haan M."/>
            <person name="Delius H."/>
            <person name="Durand P."/>
            <person name="Fairhead C."/>
            <person name="Feldmann H."/>
            <person name="Gaillon L."/>
            <person name="Galisson F."/>
            <person name="Gamo F.-J."/>
            <person name="Gancedo C."/>
            <person name="Goffeau A."/>
            <person name="Goulding S.E."/>
            <person name="Grivell L.A."/>
            <person name="Habbig B."/>
            <person name="Hand N.J."/>
            <person name="Hani J."/>
            <person name="Hattenhorst U."/>
            <person name="Hebling U."/>
            <person name="Hernando Y."/>
            <person name="Herrero E."/>
            <person name="Heumann K."/>
            <person name="Hiesel R."/>
            <person name="Hilger F."/>
            <person name="Hofmann B."/>
            <person name="Hollenberg C.P."/>
            <person name="Hughes B."/>
            <person name="Jauniaux J.-C."/>
            <person name="Kalogeropoulos A."/>
            <person name="Katsoulou C."/>
            <person name="Kordes E."/>
            <person name="Lafuente M.J."/>
            <person name="Landt O."/>
            <person name="Louis E.J."/>
            <person name="Maarse A.C."/>
            <person name="Madania A."/>
            <person name="Mannhaupt G."/>
            <person name="Marck C."/>
            <person name="Martin R.P."/>
            <person name="Mewes H.-W."/>
            <person name="Michaux G."/>
            <person name="Paces V."/>
            <person name="Parle-McDermott A.G."/>
            <person name="Pearson B.M."/>
            <person name="Perrin A."/>
            <person name="Pettersson B."/>
            <person name="Poch O."/>
            <person name="Pohl T.M."/>
            <person name="Poirey R."/>
            <person name="Portetelle D."/>
            <person name="Pujol A."/>
            <person name="Purnelle B."/>
            <person name="Ramezani Rad M."/>
            <person name="Rechmann S."/>
            <person name="Schwager C."/>
            <person name="Schweizer M."/>
            <person name="Sor F."/>
            <person name="Sterky F."/>
            <person name="Tarassov I.A."/>
            <person name="Teodoru C."/>
            <person name="Tettelin H."/>
            <person name="Thierry A."/>
            <person name="Tobiasch E."/>
            <person name="Tzermia M."/>
            <person name="Uhlen M."/>
            <person name="Unseld M."/>
            <person name="Valens M."/>
            <person name="Vandenbol M."/>
            <person name="Vetter I."/>
            <person name="Vlcek C."/>
            <person name="Voet M."/>
            <person name="Volckaert G."/>
            <person name="Voss H."/>
            <person name="Wambutt R."/>
            <person name="Wedler H."/>
            <person name="Wiemann S."/>
            <person name="Winsor B."/>
            <person name="Wolfe K.H."/>
            <person name="Zollner A."/>
            <person name="Zumstein E."/>
            <person name="Kleine K."/>
        </authorList>
    </citation>
    <scope>NUCLEOTIDE SEQUENCE [LARGE SCALE GENOMIC DNA]</scope>
    <source>
        <strain>ATCC 204508 / S288c</strain>
    </source>
</reference>
<reference key="3">
    <citation type="journal article" date="2014" name="G3 (Bethesda)">
        <title>The reference genome sequence of Saccharomyces cerevisiae: Then and now.</title>
        <authorList>
            <person name="Engel S.R."/>
            <person name="Dietrich F.S."/>
            <person name="Fisk D.G."/>
            <person name="Binkley G."/>
            <person name="Balakrishnan R."/>
            <person name="Costanzo M.C."/>
            <person name="Dwight S.S."/>
            <person name="Hitz B.C."/>
            <person name="Karra K."/>
            <person name="Nash R.S."/>
            <person name="Weng S."/>
            <person name="Wong E.D."/>
            <person name="Lloyd P."/>
            <person name="Skrzypek M.S."/>
            <person name="Miyasato S.R."/>
            <person name="Simison M."/>
            <person name="Cherry J.M."/>
        </authorList>
    </citation>
    <scope>GENOME REANNOTATION</scope>
    <source>
        <strain>ATCC 204508 / S288c</strain>
    </source>
</reference>
<reference key="4">
    <citation type="journal article" date="1999" name="Yeast">
        <title>Disruption and functional analysis of six ORFs on chromosome XV: YOL117w, YOL115w (TRF4), YOL114c, YOL112w (MSB4), YOL111c and YOL072w.</title>
        <authorList>
            <person name="Iwanejko L."/>
            <person name="Smith K.N."/>
            <person name="Loeillet S."/>
            <person name="Nicolas A."/>
            <person name="Fabre F."/>
        </authorList>
    </citation>
    <scope>FUNCTION</scope>
</reference>
<reference key="5">
    <citation type="journal article" date="2003" name="Nature">
        <title>Global analysis of protein localization in budding yeast.</title>
        <authorList>
            <person name="Huh W.-K."/>
            <person name="Falvo J.V."/>
            <person name="Gerke L.C."/>
            <person name="Carroll A.S."/>
            <person name="Howson R.W."/>
            <person name="Weissman J.S."/>
            <person name="O'Shea E.K."/>
        </authorList>
    </citation>
    <scope>SUBCELLULAR LOCATION [LARGE SCALE ANALYSIS]</scope>
</reference>
<reference key="6">
    <citation type="journal article" date="2003" name="Nature">
        <title>Global analysis of protein expression in yeast.</title>
        <authorList>
            <person name="Ghaemmaghami S."/>
            <person name="Huh W.-K."/>
            <person name="Bower K."/>
            <person name="Howson R.W."/>
            <person name="Belle A."/>
            <person name="Dephoure N."/>
            <person name="O'Shea E.K."/>
            <person name="Weissman J.S."/>
        </authorList>
    </citation>
    <scope>LEVEL OF PROTEIN EXPRESSION [LARGE SCALE ANALYSIS]</scope>
</reference>
<reference key="7">
    <citation type="journal article" date="2006" name="J. Cell Sci.">
        <title>Mdy2, a ubiquitin-like (UBL)-domain protein, is required for efficient mating in Saccharomyces cerevisiae.</title>
        <authorList>
            <person name="Hu Z."/>
            <person name="Potthoff B."/>
            <person name="Hollenberg C.P."/>
            <person name="Ramezani-Rad M."/>
        </authorList>
    </citation>
    <scope>FUNCTION</scope>
    <scope>SUBCELLULAR LOCATION</scope>
</reference>
<reference key="8">
    <citation type="journal article" date="2010" name="J. Biol. Chem.">
        <title>Crystal structure of Get4-Get5 complex and its interactions with Sgt2, Get3, and Ydj1.</title>
        <authorList>
            <person name="Chang Y.W."/>
            <person name="Chuang Y.C."/>
            <person name="Ho Y.C."/>
            <person name="Cheng M.Y."/>
            <person name="Sun Y.J."/>
            <person name="Hsiao C.D."/>
            <person name="Wang C."/>
        </authorList>
    </citation>
    <scope>X-RAY CRYSTALLOGRAPHY (1.99 ANGSTROMS) OF 1-59 IN COMPLEX WITH GET4</scope>
    <scope>SUBCELLULAR LOCATION</scope>
</reference>
<proteinExistence type="evidence at protein level"/>